<dbReference type="EMBL" id="AB006424">
    <property type="protein sequence ID" value="BAA33125.1"/>
    <property type="molecule type" value="Genomic_DNA"/>
</dbReference>
<dbReference type="EMBL" id="AL009126">
    <property type="protein sequence ID" value="CAB12022.1"/>
    <property type="molecule type" value="Genomic_DNA"/>
</dbReference>
<dbReference type="PIR" id="G69749">
    <property type="entry name" value="G69749"/>
</dbReference>
<dbReference type="RefSeq" id="NP_388110.1">
    <property type="nucleotide sequence ID" value="NC_000964.3"/>
</dbReference>
<dbReference type="RefSeq" id="WP_003234861.1">
    <property type="nucleotide sequence ID" value="NZ_OZ025638.1"/>
</dbReference>
<dbReference type="FunCoup" id="O31453">
    <property type="interactions" value="123"/>
</dbReference>
<dbReference type="STRING" id="224308.BSU02280"/>
<dbReference type="PaxDb" id="224308-BSU02280"/>
<dbReference type="EnsemblBacteria" id="CAB12022">
    <property type="protein sequence ID" value="CAB12022"/>
    <property type="gene ID" value="BSU_02280"/>
</dbReference>
<dbReference type="GeneID" id="938432"/>
<dbReference type="KEGG" id="bsu:BSU02280"/>
<dbReference type="PATRIC" id="fig|224308.179.peg.234"/>
<dbReference type="eggNOG" id="COG0586">
    <property type="taxonomic scope" value="Bacteria"/>
</dbReference>
<dbReference type="InParanoid" id="O31453"/>
<dbReference type="OrthoDB" id="9782291at2"/>
<dbReference type="PhylomeDB" id="O31453"/>
<dbReference type="BioCyc" id="BSUB:BSU02280-MONOMER"/>
<dbReference type="Proteomes" id="UP000001570">
    <property type="component" value="Chromosome"/>
</dbReference>
<dbReference type="GO" id="GO:0005886">
    <property type="term" value="C:plasma membrane"/>
    <property type="evidence" value="ECO:0000318"/>
    <property type="project" value="GO_Central"/>
</dbReference>
<dbReference type="InterPro" id="IPR051311">
    <property type="entry name" value="DedA_domain"/>
</dbReference>
<dbReference type="InterPro" id="IPR032816">
    <property type="entry name" value="VTT_dom"/>
</dbReference>
<dbReference type="PANTHER" id="PTHR42709">
    <property type="entry name" value="ALKALINE PHOSPHATASE LIKE PROTEIN"/>
    <property type="match status" value="1"/>
</dbReference>
<dbReference type="PANTHER" id="PTHR42709:SF9">
    <property type="entry name" value="ALKALINE PHOSPHATASE LIKE PROTEIN"/>
    <property type="match status" value="1"/>
</dbReference>
<dbReference type="Pfam" id="PF09335">
    <property type="entry name" value="VTT_dom"/>
    <property type="match status" value="1"/>
</dbReference>
<proteinExistence type="inferred from homology"/>
<protein>
    <recommendedName>
        <fullName>Uncharacterized membrane protein YbfM</fullName>
    </recommendedName>
</protein>
<organism>
    <name type="scientific">Bacillus subtilis (strain 168)</name>
    <dbReference type="NCBI Taxonomy" id="224308"/>
    <lineage>
        <taxon>Bacteria</taxon>
        <taxon>Bacillati</taxon>
        <taxon>Bacillota</taxon>
        <taxon>Bacilli</taxon>
        <taxon>Bacillales</taxon>
        <taxon>Bacillaceae</taxon>
        <taxon>Bacillus</taxon>
    </lineage>
</organism>
<evidence type="ECO:0000255" key="1"/>
<evidence type="ECO:0000305" key="2"/>
<feature type="chain" id="PRO_0000161422" description="Uncharacterized membrane protein YbfM">
    <location>
        <begin position="1"/>
        <end position="162"/>
    </location>
</feature>
<feature type="transmembrane region" description="Helical" evidence="1">
    <location>
        <begin position="7"/>
        <end position="27"/>
    </location>
</feature>
<feature type="transmembrane region" description="Helical" evidence="1">
    <location>
        <begin position="51"/>
        <end position="71"/>
    </location>
</feature>
<feature type="transmembrane region" description="Helical" evidence="1">
    <location>
        <begin position="134"/>
        <end position="154"/>
    </location>
</feature>
<accession>O31453</accession>
<gene>
    <name type="primary">ybfM</name>
    <name type="ordered locus">BSU02280</name>
</gene>
<sequence length="162" mass="18338">MELVQQLIADYGYLAIFLMLVLGIVGLPIPDEVMMTVVGYFTHTDVLNYELSILISFVGALLGMLISYMIGRKAGRPFIDKYGKWVGLKEKRMMKVEKWMKKYGPYSLILGYFIPGVRHVTCYFSGIGKMDLKTYVAFAAIGAFLWCFVFITIGRVIGIIHV</sequence>
<reference key="1">
    <citation type="submission" date="1997-07" db="EMBL/GenBank/DDBJ databases">
        <title>Sequence analysis of the 70kb region between 17 and 23 degree of the Bacillus subtilis chromosome.</title>
        <authorList>
            <person name="Haga K."/>
            <person name="Liu H."/>
            <person name="Yasumoto K."/>
            <person name="Takahashi H."/>
            <person name="Yoshikawa H."/>
        </authorList>
    </citation>
    <scope>NUCLEOTIDE SEQUENCE [GENOMIC DNA]</scope>
    <source>
        <strain>168</strain>
    </source>
</reference>
<reference key="2">
    <citation type="journal article" date="1997" name="Nature">
        <title>The complete genome sequence of the Gram-positive bacterium Bacillus subtilis.</title>
        <authorList>
            <person name="Kunst F."/>
            <person name="Ogasawara N."/>
            <person name="Moszer I."/>
            <person name="Albertini A.M."/>
            <person name="Alloni G."/>
            <person name="Azevedo V."/>
            <person name="Bertero M.G."/>
            <person name="Bessieres P."/>
            <person name="Bolotin A."/>
            <person name="Borchert S."/>
            <person name="Borriss R."/>
            <person name="Boursier L."/>
            <person name="Brans A."/>
            <person name="Braun M."/>
            <person name="Brignell S.C."/>
            <person name="Bron S."/>
            <person name="Brouillet S."/>
            <person name="Bruschi C.V."/>
            <person name="Caldwell B."/>
            <person name="Capuano V."/>
            <person name="Carter N.M."/>
            <person name="Choi S.-K."/>
            <person name="Codani J.-J."/>
            <person name="Connerton I.F."/>
            <person name="Cummings N.J."/>
            <person name="Daniel R.A."/>
            <person name="Denizot F."/>
            <person name="Devine K.M."/>
            <person name="Duesterhoeft A."/>
            <person name="Ehrlich S.D."/>
            <person name="Emmerson P.T."/>
            <person name="Entian K.-D."/>
            <person name="Errington J."/>
            <person name="Fabret C."/>
            <person name="Ferrari E."/>
            <person name="Foulger D."/>
            <person name="Fritz C."/>
            <person name="Fujita M."/>
            <person name="Fujita Y."/>
            <person name="Fuma S."/>
            <person name="Galizzi A."/>
            <person name="Galleron N."/>
            <person name="Ghim S.-Y."/>
            <person name="Glaser P."/>
            <person name="Goffeau A."/>
            <person name="Golightly E.J."/>
            <person name="Grandi G."/>
            <person name="Guiseppi G."/>
            <person name="Guy B.J."/>
            <person name="Haga K."/>
            <person name="Haiech J."/>
            <person name="Harwood C.R."/>
            <person name="Henaut A."/>
            <person name="Hilbert H."/>
            <person name="Holsappel S."/>
            <person name="Hosono S."/>
            <person name="Hullo M.-F."/>
            <person name="Itaya M."/>
            <person name="Jones L.-M."/>
            <person name="Joris B."/>
            <person name="Karamata D."/>
            <person name="Kasahara Y."/>
            <person name="Klaerr-Blanchard M."/>
            <person name="Klein C."/>
            <person name="Kobayashi Y."/>
            <person name="Koetter P."/>
            <person name="Koningstein G."/>
            <person name="Krogh S."/>
            <person name="Kumano M."/>
            <person name="Kurita K."/>
            <person name="Lapidus A."/>
            <person name="Lardinois S."/>
            <person name="Lauber J."/>
            <person name="Lazarevic V."/>
            <person name="Lee S.-M."/>
            <person name="Levine A."/>
            <person name="Liu H."/>
            <person name="Masuda S."/>
            <person name="Mauel C."/>
            <person name="Medigue C."/>
            <person name="Medina N."/>
            <person name="Mellado R.P."/>
            <person name="Mizuno M."/>
            <person name="Moestl D."/>
            <person name="Nakai S."/>
            <person name="Noback M."/>
            <person name="Noone D."/>
            <person name="O'Reilly M."/>
            <person name="Ogawa K."/>
            <person name="Ogiwara A."/>
            <person name="Oudega B."/>
            <person name="Park S.-H."/>
            <person name="Parro V."/>
            <person name="Pohl T.M."/>
            <person name="Portetelle D."/>
            <person name="Porwollik S."/>
            <person name="Prescott A.M."/>
            <person name="Presecan E."/>
            <person name="Pujic P."/>
            <person name="Purnelle B."/>
            <person name="Rapoport G."/>
            <person name="Rey M."/>
            <person name="Reynolds S."/>
            <person name="Rieger M."/>
            <person name="Rivolta C."/>
            <person name="Rocha E."/>
            <person name="Roche B."/>
            <person name="Rose M."/>
            <person name="Sadaie Y."/>
            <person name="Sato T."/>
            <person name="Scanlan E."/>
            <person name="Schleich S."/>
            <person name="Schroeter R."/>
            <person name="Scoffone F."/>
            <person name="Sekiguchi J."/>
            <person name="Sekowska A."/>
            <person name="Seror S.J."/>
            <person name="Serror P."/>
            <person name="Shin B.-S."/>
            <person name="Soldo B."/>
            <person name="Sorokin A."/>
            <person name="Tacconi E."/>
            <person name="Takagi T."/>
            <person name="Takahashi H."/>
            <person name="Takemaru K."/>
            <person name="Takeuchi M."/>
            <person name="Tamakoshi A."/>
            <person name="Tanaka T."/>
            <person name="Terpstra P."/>
            <person name="Tognoni A."/>
            <person name="Tosato V."/>
            <person name="Uchiyama S."/>
            <person name="Vandenbol M."/>
            <person name="Vannier F."/>
            <person name="Vassarotti A."/>
            <person name="Viari A."/>
            <person name="Wambutt R."/>
            <person name="Wedler E."/>
            <person name="Wedler H."/>
            <person name="Weitzenegger T."/>
            <person name="Winters P."/>
            <person name="Wipat A."/>
            <person name="Yamamoto H."/>
            <person name="Yamane K."/>
            <person name="Yasumoto K."/>
            <person name="Yata K."/>
            <person name="Yoshida K."/>
            <person name="Yoshikawa H.-F."/>
            <person name="Zumstein E."/>
            <person name="Yoshikawa H."/>
            <person name="Danchin A."/>
        </authorList>
    </citation>
    <scope>NUCLEOTIDE SEQUENCE [LARGE SCALE GENOMIC DNA]</scope>
    <source>
        <strain>168</strain>
    </source>
</reference>
<keyword id="KW-1003">Cell membrane</keyword>
<keyword id="KW-0472">Membrane</keyword>
<keyword id="KW-1185">Reference proteome</keyword>
<keyword id="KW-0812">Transmembrane</keyword>
<keyword id="KW-1133">Transmembrane helix</keyword>
<comment type="subcellular location">
    <subcellularLocation>
        <location evidence="2">Cell membrane</location>
        <topology evidence="2">Multi-pass membrane protein</topology>
    </subcellularLocation>
</comment>
<comment type="similarity">
    <text evidence="2">Belongs to the DedA family.</text>
</comment>
<name>YBFM_BACSU</name>